<accession>Q56112</accession>
<proteinExistence type="inferred from homology"/>
<evidence type="ECO:0000250" key="1"/>
<evidence type="ECO:0000255" key="2">
    <source>
        <dbReference type="HAMAP-Rule" id="MF_00534"/>
    </source>
</evidence>
<evidence type="ECO:0000305" key="3"/>
<protein>
    <recommendedName>
        <fullName evidence="2">Asparagine--tRNA ligase</fullName>
        <ecNumber evidence="2">6.1.1.22</ecNumber>
    </recommendedName>
    <alternativeName>
        <fullName evidence="2">Asparaginyl-tRNA synthetase</fullName>
        <shortName evidence="2">AsnRS</shortName>
    </alternativeName>
</protein>
<comment type="catalytic activity">
    <reaction evidence="2">
        <text>tRNA(Asn) + L-asparagine + ATP = L-asparaginyl-tRNA(Asn) + AMP + diphosphate + H(+)</text>
        <dbReference type="Rhea" id="RHEA:11180"/>
        <dbReference type="Rhea" id="RHEA-COMP:9659"/>
        <dbReference type="Rhea" id="RHEA-COMP:9674"/>
        <dbReference type="ChEBI" id="CHEBI:15378"/>
        <dbReference type="ChEBI" id="CHEBI:30616"/>
        <dbReference type="ChEBI" id="CHEBI:33019"/>
        <dbReference type="ChEBI" id="CHEBI:58048"/>
        <dbReference type="ChEBI" id="CHEBI:78442"/>
        <dbReference type="ChEBI" id="CHEBI:78515"/>
        <dbReference type="ChEBI" id="CHEBI:456215"/>
        <dbReference type="EC" id="6.1.1.22"/>
    </reaction>
</comment>
<comment type="subunit">
    <text evidence="2">Homodimer.</text>
</comment>
<comment type="subcellular location">
    <subcellularLocation>
        <location evidence="2">Cytoplasm</location>
    </subcellularLocation>
</comment>
<comment type="similarity">
    <text evidence="2">Belongs to the class-II aminoacyl-tRNA synthetase family.</text>
</comment>
<organism>
    <name type="scientific">Salmonella typhi</name>
    <dbReference type="NCBI Taxonomy" id="90370"/>
    <lineage>
        <taxon>Bacteria</taxon>
        <taxon>Pseudomonadati</taxon>
        <taxon>Pseudomonadota</taxon>
        <taxon>Gammaproteobacteria</taxon>
        <taxon>Enterobacterales</taxon>
        <taxon>Enterobacteriaceae</taxon>
        <taxon>Salmonella</taxon>
    </lineage>
</organism>
<name>SYN_SALTI</name>
<sequence length="466" mass="52537">MSVVPVADVLQGRVAVDQEVTVRGWVRTRRDSKAGISFLAVYDGSCFDPVQAVINNSLPNYNEEVLHLTTGCSVVVTGKVVASPGQGQSFEIQATKVEVAGWVEDPDTYPMAAKRHSIEYLREVAHLRPRTNLIGAVARVRHTLAQALHRFFDEQGFFWVSTPLITASDTEGAGEMFRVSTLDLENLPRNDQGRVDFDKDFFGKESFLTVSGQLNGETYACALSKIYTFGPTFRAENSNTSRHLAEFWMLEPEVAFADLEDNARLAEAMLKYVFKAVLEERADDMKFFAERVDKDAIARLERFVSTDFAQVDYTDAVAILERCGKTFENPVFWGVDLSSEHERYLAEEHFKAPVVVKNYPKEIKAFYMRLNEDGKTVAAMDVLAPGIGEIIGGSQREERLDVLDARMAEMGLNKEDYWWYRDLRRYGTVPHSGFGLGFERLIAYVTGVQNVRDVIPFPRTPRNASF</sequence>
<feature type="initiator methionine" description="Removed" evidence="1">
    <location>
        <position position="1"/>
    </location>
</feature>
<feature type="chain" id="PRO_0000176443" description="Asparagine--tRNA ligase">
    <location>
        <begin position="2"/>
        <end position="466"/>
    </location>
</feature>
<feature type="sequence conflict" description="In Ref. 3; CAA61904." evidence="3" ref="3">
    <original>R</original>
    <variation>S</variation>
    <location>
        <position position="421"/>
    </location>
</feature>
<dbReference type="EC" id="6.1.1.22" evidence="2"/>
<dbReference type="EMBL" id="AL513382">
    <property type="protein sequence ID" value="CAD05400.1"/>
    <property type="molecule type" value="Genomic_DNA"/>
</dbReference>
<dbReference type="EMBL" id="AE014613">
    <property type="protein sequence ID" value="AAO69549.1"/>
    <property type="molecule type" value="Genomic_DNA"/>
</dbReference>
<dbReference type="EMBL" id="X89757">
    <property type="protein sequence ID" value="CAA61904.1"/>
    <property type="molecule type" value="Genomic_DNA"/>
</dbReference>
<dbReference type="RefSeq" id="NP_455486.1">
    <property type="nucleotide sequence ID" value="NC_003198.1"/>
</dbReference>
<dbReference type="RefSeq" id="WP_000117867.1">
    <property type="nucleotide sequence ID" value="NZ_WSUR01000013.1"/>
</dbReference>
<dbReference type="SMR" id="Q56112"/>
<dbReference type="STRING" id="220341.gene:17584991"/>
<dbReference type="KEGG" id="stt:t1934"/>
<dbReference type="KEGG" id="sty:STY1004"/>
<dbReference type="PATRIC" id="fig|220341.7.peg.1012"/>
<dbReference type="eggNOG" id="COG0017">
    <property type="taxonomic scope" value="Bacteria"/>
</dbReference>
<dbReference type="HOGENOM" id="CLU_004553_2_0_6"/>
<dbReference type="OMA" id="PEMAFYD"/>
<dbReference type="OrthoDB" id="9762036at2"/>
<dbReference type="Proteomes" id="UP000000541">
    <property type="component" value="Chromosome"/>
</dbReference>
<dbReference type="Proteomes" id="UP000002670">
    <property type="component" value="Chromosome"/>
</dbReference>
<dbReference type="GO" id="GO:0005737">
    <property type="term" value="C:cytoplasm"/>
    <property type="evidence" value="ECO:0007669"/>
    <property type="project" value="UniProtKB-SubCell"/>
</dbReference>
<dbReference type="GO" id="GO:0004816">
    <property type="term" value="F:asparagine-tRNA ligase activity"/>
    <property type="evidence" value="ECO:0007669"/>
    <property type="project" value="UniProtKB-UniRule"/>
</dbReference>
<dbReference type="GO" id="GO:0005524">
    <property type="term" value="F:ATP binding"/>
    <property type="evidence" value="ECO:0007669"/>
    <property type="project" value="UniProtKB-UniRule"/>
</dbReference>
<dbReference type="GO" id="GO:0003676">
    <property type="term" value="F:nucleic acid binding"/>
    <property type="evidence" value="ECO:0007669"/>
    <property type="project" value="InterPro"/>
</dbReference>
<dbReference type="GO" id="GO:0006421">
    <property type="term" value="P:asparaginyl-tRNA aminoacylation"/>
    <property type="evidence" value="ECO:0007669"/>
    <property type="project" value="UniProtKB-UniRule"/>
</dbReference>
<dbReference type="CDD" id="cd00776">
    <property type="entry name" value="AsxRS_core"/>
    <property type="match status" value="1"/>
</dbReference>
<dbReference type="CDD" id="cd04318">
    <property type="entry name" value="EcAsnRS_like_N"/>
    <property type="match status" value="1"/>
</dbReference>
<dbReference type="FunFam" id="2.40.50.140:FF:000116">
    <property type="entry name" value="Asparagine--tRNA ligase"/>
    <property type="match status" value="1"/>
</dbReference>
<dbReference type="FunFam" id="3.30.930.10:FF:000016">
    <property type="entry name" value="Asparagine--tRNA ligase"/>
    <property type="match status" value="1"/>
</dbReference>
<dbReference type="Gene3D" id="3.30.930.10">
    <property type="entry name" value="Bira Bifunctional Protein, Domain 2"/>
    <property type="match status" value="1"/>
</dbReference>
<dbReference type="Gene3D" id="2.40.50.140">
    <property type="entry name" value="Nucleic acid-binding proteins"/>
    <property type="match status" value="1"/>
</dbReference>
<dbReference type="HAMAP" id="MF_00534">
    <property type="entry name" value="Asn_tRNA_synth"/>
    <property type="match status" value="1"/>
</dbReference>
<dbReference type="InterPro" id="IPR004364">
    <property type="entry name" value="Aa-tRNA-synt_II"/>
</dbReference>
<dbReference type="InterPro" id="IPR006195">
    <property type="entry name" value="aa-tRNA-synth_II"/>
</dbReference>
<dbReference type="InterPro" id="IPR045864">
    <property type="entry name" value="aa-tRNA-synth_II/BPL/LPL"/>
</dbReference>
<dbReference type="InterPro" id="IPR004522">
    <property type="entry name" value="Asn-tRNA-ligase"/>
</dbReference>
<dbReference type="InterPro" id="IPR002312">
    <property type="entry name" value="Asp/Asn-tRNA-synth_IIb"/>
</dbReference>
<dbReference type="InterPro" id="IPR012340">
    <property type="entry name" value="NA-bd_OB-fold"/>
</dbReference>
<dbReference type="InterPro" id="IPR004365">
    <property type="entry name" value="NA-bd_OB_tRNA"/>
</dbReference>
<dbReference type="NCBIfam" id="TIGR00457">
    <property type="entry name" value="asnS"/>
    <property type="match status" value="1"/>
</dbReference>
<dbReference type="NCBIfam" id="NF003037">
    <property type="entry name" value="PRK03932.1"/>
    <property type="match status" value="1"/>
</dbReference>
<dbReference type="PANTHER" id="PTHR22594:SF34">
    <property type="entry name" value="ASPARAGINE--TRNA LIGASE, MITOCHONDRIAL-RELATED"/>
    <property type="match status" value="1"/>
</dbReference>
<dbReference type="PANTHER" id="PTHR22594">
    <property type="entry name" value="ASPARTYL/LYSYL-TRNA SYNTHETASE"/>
    <property type="match status" value="1"/>
</dbReference>
<dbReference type="Pfam" id="PF00152">
    <property type="entry name" value="tRNA-synt_2"/>
    <property type="match status" value="1"/>
</dbReference>
<dbReference type="Pfam" id="PF01336">
    <property type="entry name" value="tRNA_anti-codon"/>
    <property type="match status" value="1"/>
</dbReference>
<dbReference type="PRINTS" id="PR01042">
    <property type="entry name" value="TRNASYNTHASP"/>
</dbReference>
<dbReference type="SUPFAM" id="SSF55681">
    <property type="entry name" value="Class II aaRS and biotin synthetases"/>
    <property type="match status" value="1"/>
</dbReference>
<dbReference type="SUPFAM" id="SSF50249">
    <property type="entry name" value="Nucleic acid-binding proteins"/>
    <property type="match status" value="1"/>
</dbReference>
<dbReference type="PROSITE" id="PS50862">
    <property type="entry name" value="AA_TRNA_LIGASE_II"/>
    <property type="match status" value="1"/>
</dbReference>
<keyword id="KW-0030">Aminoacyl-tRNA synthetase</keyword>
<keyword id="KW-0067">ATP-binding</keyword>
<keyword id="KW-0963">Cytoplasm</keyword>
<keyword id="KW-0436">Ligase</keyword>
<keyword id="KW-0547">Nucleotide-binding</keyword>
<keyword id="KW-0648">Protein biosynthesis</keyword>
<reference key="1">
    <citation type="journal article" date="2001" name="Nature">
        <title>Complete genome sequence of a multiple drug resistant Salmonella enterica serovar Typhi CT18.</title>
        <authorList>
            <person name="Parkhill J."/>
            <person name="Dougan G."/>
            <person name="James K.D."/>
            <person name="Thomson N.R."/>
            <person name="Pickard D."/>
            <person name="Wain J."/>
            <person name="Churcher C.M."/>
            <person name="Mungall K.L."/>
            <person name="Bentley S.D."/>
            <person name="Holden M.T.G."/>
            <person name="Sebaihia M."/>
            <person name="Baker S."/>
            <person name="Basham D."/>
            <person name="Brooks K."/>
            <person name="Chillingworth T."/>
            <person name="Connerton P."/>
            <person name="Cronin A."/>
            <person name="Davis P."/>
            <person name="Davies R.M."/>
            <person name="Dowd L."/>
            <person name="White N."/>
            <person name="Farrar J."/>
            <person name="Feltwell T."/>
            <person name="Hamlin N."/>
            <person name="Haque A."/>
            <person name="Hien T.T."/>
            <person name="Holroyd S."/>
            <person name="Jagels K."/>
            <person name="Krogh A."/>
            <person name="Larsen T.S."/>
            <person name="Leather S."/>
            <person name="Moule S."/>
            <person name="O'Gaora P."/>
            <person name="Parry C."/>
            <person name="Quail M.A."/>
            <person name="Rutherford K.M."/>
            <person name="Simmonds M."/>
            <person name="Skelton J."/>
            <person name="Stevens K."/>
            <person name="Whitehead S."/>
            <person name="Barrell B.G."/>
        </authorList>
    </citation>
    <scope>NUCLEOTIDE SEQUENCE [LARGE SCALE GENOMIC DNA]</scope>
    <source>
        <strain>CT18</strain>
    </source>
</reference>
<reference key="2">
    <citation type="journal article" date="2003" name="J. Bacteriol.">
        <title>Comparative genomics of Salmonella enterica serovar Typhi strains Ty2 and CT18.</title>
        <authorList>
            <person name="Deng W."/>
            <person name="Liou S.-R."/>
            <person name="Plunkett G. III"/>
            <person name="Mayhew G.F."/>
            <person name="Rose D.J."/>
            <person name="Burland V."/>
            <person name="Kodoyianni V."/>
            <person name="Schwartz D.C."/>
            <person name="Blattner F.R."/>
        </authorList>
    </citation>
    <scope>NUCLEOTIDE SEQUENCE [LARGE SCALE GENOMIC DNA]</scope>
    <source>
        <strain>ATCC 700931 / Ty2</strain>
    </source>
</reference>
<reference key="3">
    <citation type="submission" date="1996-06" db="EMBL/GenBank/DDBJ databases">
        <authorList>
            <person name="Fernandez-Mora M."/>
            <person name="Calva E."/>
        </authorList>
    </citation>
    <scope>NUCLEOTIDE SEQUENCE [GENOMIC DNA] OF 358-466</scope>
    <source>
        <strain>IMSS-1</strain>
    </source>
</reference>
<gene>
    <name evidence="2" type="primary">asnS</name>
    <name type="synonym">tss</name>
    <name type="ordered locus">STY1004</name>
    <name type="ordered locus">t1934</name>
</gene>